<keyword id="KW-1015">Disulfide bond</keyword>
<keyword id="KW-1185">Reference proteome</keyword>
<reference key="1">
    <citation type="submission" date="2006-08" db="EMBL/GenBank/DDBJ databases">
        <authorList>
            <consortium name="NIH - Zebrafish Gene Collection (ZGC) project"/>
        </authorList>
    </citation>
    <scope>NUCLEOTIDE SEQUENCE [LARGE SCALE MRNA]</scope>
    <source>
        <tissue>Eye</tissue>
    </source>
</reference>
<name>COA5_DANRE</name>
<sequence>MPKYYEDKEDDGRACSGLREDFKACLLQHDCVVKEGKKPSECLKEGHCRSMQVAFFECKRSMLDTRSRFRGRKGE</sequence>
<dbReference type="EMBL" id="BC122274">
    <property type="protein sequence ID" value="AAI22275.1"/>
    <property type="molecule type" value="mRNA"/>
</dbReference>
<dbReference type="SMR" id="Q0P451"/>
<dbReference type="FunCoup" id="Q0P451">
    <property type="interactions" value="912"/>
</dbReference>
<dbReference type="STRING" id="7955.ENSDARP00000119256"/>
<dbReference type="PaxDb" id="7955-ENSDARP00000119256"/>
<dbReference type="AGR" id="ZFIN:ZDB-GENE-060825-53"/>
<dbReference type="ZFIN" id="ZDB-GENE-060825-53">
    <property type="gene designation" value="coa5"/>
</dbReference>
<dbReference type="eggNOG" id="KOG4114">
    <property type="taxonomic scope" value="Eukaryota"/>
</dbReference>
<dbReference type="InParanoid" id="Q0P451"/>
<dbReference type="PhylomeDB" id="Q0P451"/>
<dbReference type="Reactome" id="R-DRE-9864848">
    <property type="pathway name" value="Complex IV assembly"/>
</dbReference>
<dbReference type="PRO" id="PR:Q0P451"/>
<dbReference type="Proteomes" id="UP000000437">
    <property type="component" value="Unplaced"/>
</dbReference>
<dbReference type="GO" id="GO:0005739">
    <property type="term" value="C:mitochondrion"/>
    <property type="evidence" value="ECO:0000318"/>
    <property type="project" value="GO_Central"/>
</dbReference>
<dbReference type="GO" id="GO:0033617">
    <property type="term" value="P:mitochondrial cytochrome c oxidase assembly"/>
    <property type="evidence" value="ECO:0000318"/>
    <property type="project" value="GO_Central"/>
</dbReference>
<dbReference type="InterPro" id="IPR018793">
    <property type="entry name" value="Cyt_c_oxidase_assmbl_Pet191"/>
</dbReference>
<dbReference type="PANTHER" id="PTHR28627">
    <property type="entry name" value="CYTOCHROME C OXIDASE ASSEMBLY FACTOR 5"/>
    <property type="match status" value="1"/>
</dbReference>
<dbReference type="PANTHER" id="PTHR28627:SF1">
    <property type="entry name" value="CYTOCHROME C OXIDASE ASSEMBLY FACTOR 5"/>
    <property type="match status" value="1"/>
</dbReference>
<dbReference type="Pfam" id="PF10203">
    <property type="entry name" value="Pet191_N"/>
    <property type="match status" value="1"/>
</dbReference>
<dbReference type="PROSITE" id="PS51808">
    <property type="entry name" value="CHCH"/>
    <property type="match status" value="1"/>
</dbReference>
<evidence type="ECO:0000250" key="1"/>
<evidence type="ECO:0000255" key="2">
    <source>
        <dbReference type="PROSITE-ProRule" id="PRU01150"/>
    </source>
</evidence>
<evidence type="ECO:0000305" key="3"/>
<organism>
    <name type="scientific">Danio rerio</name>
    <name type="common">Zebrafish</name>
    <name type="synonym">Brachydanio rerio</name>
    <dbReference type="NCBI Taxonomy" id="7955"/>
    <lineage>
        <taxon>Eukaryota</taxon>
        <taxon>Metazoa</taxon>
        <taxon>Chordata</taxon>
        <taxon>Craniata</taxon>
        <taxon>Vertebrata</taxon>
        <taxon>Euteleostomi</taxon>
        <taxon>Actinopterygii</taxon>
        <taxon>Neopterygii</taxon>
        <taxon>Teleostei</taxon>
        <taxon>Ostariophysi</taxon>
        <taxon>Cypriniformes</taxon>
        <taxon>Danionidae</taxon>
        <taxon>Danioninae</taxon>
        <taxon>Danio</taxon>
    </lineage>
</organism>
<accession>Q0P451</accession>
<comment type="function">
    <text evidence="1">Involved in an early step of the mitochondrial complex IV assembly process.</text>
</comment>
<comment type="similarity">
    <text evidence="3">Belongs to the PET191 family.</text>
</comment>
<protein>
    <recommendedName>
        <fullName>Cytochrome c oxidase assembly factor 5</fullName>
    </recommendedName>
</protein>
<feature type="chain" id="PRO_0000325879" description="Cytochrome c oxidase assembly factor 5">
    <location>
        <begin position="1"/>
        <end position="75"/>
    </location>
</feature>
<feature type="domain" description="CHCH" evidence="2">
    <location>
        <begin position="28"/>
        <end position="66"/>
    </location>
</feature>
<feature type="short sequence motif" description="Cx10C motif" evidence="2">
    <location>
        <begin position="31"/>
        <end position="42"/>
    </location>
</feature>
<feature type="short sequence motif" description="Cx9C motif" evidence="2">
    <location>
        <begin position="48"/>
        <end position="58"/>
    </location>
</feature>
<feature type="disulfide bond" evidence="2">
    <location>
        <begin position="31"/>
        <end position="58"/>
    </location>
</feature>
<feature type="disulfide bond" evidence="2">
    <location>
        <begin position="42"/>
        <end position="48"/>
    </location>
</feature>
<proteinExistence type="inferred from homology"/>
<gene>
    <name type="primary">coa5</name>
    <name type="ORF">zgc:153408</name>
</gene>